<feature type="peptide" id="PRO_0000421508" description="Extended FMRFamide-4" evidence="3">
    <location>
        <begin position="1"/>
        <end position="9"/>
    </location>
</feature>
<feature type="modified residue" description="Leucine amide" evidence="3">
    <location>
        <position position="9"/>
    </location>
</feature>
<feature type="unsure residue" description="L or I" evidence="3">
    <location>
        <position position="7"/>
    </location>
</feature>
<feature type="unsure residue" description="L or I" evidence="3">
    <location>
        <position position="9"/>
    </location>
</feature>
<accession>B3A0J9</accession>
<reference evidence="5" key="1">
    <citation type="journal article" date="2012" name="Syst. Biol.">
        <title>Peptidomics-based phylogeny and biogeography of Mantophasmatodea (Hexapoda).</title>
        <authorList>
            <person name="Predel R."/>
            <person name="Neupert S."/>
            <person name="Huetteroth W."/>
            <person name="Kahnt J."/>
            <person name="Waidelich D."/>
            <person name="Roth S."/>
        </authorList>
    </citation>
    <scope>PROTEIN SEQUENCE</scope>
    <scope>AMIDATION AT LEU-9</scope>
    <source>
        <tissue evidence="3">Thoracic perisympathetic organs</tissue>
    </source>
</reference>
<dbReference type="GO" id="GO:0005576">
    <property type="term" value="C:extracellular region"/>
    <property type="evidence" value="ECO:0007669"/>
    <property type="project" value="UniProtKB-SubCell"/>
</dbReference>
<dbReference type="GO" id="GO:0007218">
    <property type="term" value="P:neuropeptide signaling pathway"/>
    <property type="evidence" value="ECO:0007669"/>
    <property type="project" value="UniProtKB-KW"/>
</dbReference>
<protein>
    <recommendedName>
        <fullName evidence="4">Extended FMRFamide-4</fullName>
        <shortName evidence="4">FMRFa-4</shortName>
    </recommendedName>
</protein>
<evidence type="ECO:0000250" key="1">
    <source>
        <dbReference type="UniProtKB" id="P34405"/>
    </source>
</evidence>
<evidence type="ECO:0000255" key="2"/>
<evidence type="ECO:0000269" key="3">
    <source>
    </source>
</evidence>
<evidence type="ECO:0000303" key="4">
    <source>
    </source>
</evidence>
<evidence type="ECO:0000305" key="5"/>
<evidence type="ECO:0000305" key="6">
    <source>
    </source>
</evidence>
<keyword id="KW-0027">Amidation</keyword>
<keyword id="KW-0903">Direct protein sequencing</keyword>
<keyword id="KW-0527">Neuropeptide</keyword>
<keyword id="KW-0964">Secreted</keyword>
<proteinExistence type="evidence at protein level"/>
<sequence length="9" mass="993">GVDSSFLRL</sequence>
<organism>
    <name type="scientific">Pachyphasma brandbergense</name>
    <name type="common">Gladiator</name>
    <name type="synonym">Heel-walker</name>
    <dbReference type="NCBI Taxonomy" id="1041430"/>
    <lineage>
        <taxon>Eukaryota</taxon>
        <taxon>Metazoa</taxon>
        <taxon>Ecdysozoa</taxon>
        <taxon>Arthropoda</taxon>
        <taxon>Hexapoda</taxon>
        <taxon>Insecta</taxon>
        <taxon>Pterygota</taxon>
        <taxon>Neoptera</taxon>
        <taxon>Polyneoptera</taxon>
        <taxon>Mantophasmatodea</taxon>
        <taxon>Mantophasmatidae</taxon>
        <taxon>Pachyphasma</taxon>
    </lineage>
</organism>
<comment type="function">
    <text evidence="1">FMRFamides and FMRFamide-like peptides are neuropeptides.</text>
</comment>
<comment type="subcellular location">
    <subcellularLocation>
        <location evidence="6">Secreted</location>
    </subcellularLocation>
</comment>
<comment type="similarity">
    <text evidence="2">Belongs to the FARP (FMRF amide related peptide) family.</text>
</comment>
<name>FAR4_PACBA</name>